<feature type="chain" id="PRO_1000185619" description="Bifunctional protein FolD">
    <location>
        <begin position="1"/>
        <end position="284"/>
    </location>
</feature>
<feature type="binding site" evidence="1">
    <location>
        <begin position="164"/>
        <end position="166"/>
    </location>
    <ligand>
        <name>NADP(+)</name>
        <dbReference type="ChEBI" id="CHEBI:58349"/>
    </ligand>
</feature>
<feature type="binding site" evidence="1">
    <location>
        <position position="189"/>
    </location>
    <ligand>
        <name>NADP(+)</name>
        <dbReference type="ChEBI" id="CHEBI:58349"/>
    </ligand>
</feature>
<accession>B8DFW8</accession>
<proteinExistence type="inferred from homology"/>
<reference key="1">
    <citation type="journal article" date="2011" name="J. Bacteriol.">
        <title>Genome sequence of lineage III Listeria monocytogenes strain HCC23.</title>
        <authorList>
            <person name="Steele C.L."/>
            <person name="Donaldson J.R."/>
            <person name="Paul D."/>
            <person name="Banes M.M."/>
            <person name="Arick T."/>
            <person name="Bridges S.M."/>
            <person name="Lawrence M.L."/>
        </authorList>
    </citation>
    <scope>NUCLEOTIDE SEQUENCE [LARGE SCALE GENOMIC DNA]</scope>
    <source>
        <strain>HCC23</strain>
    </source>
</reference>
<protein>
    <recommendedName>
        <fullName evidence="1">Bifunctional protein FolD</fullName>
    </recommendedName>
    <domain>
        <recommendedName>
            <fullName evidence="1">Methylenetetrahydrofolate dehydrogenase</fullName>
            <ecNumber evidence="1">1.5.1.5</ecNumber>
        </recommendedName>
    </domain>
    <domain>
        <recommendedName>
            <fullName evidence="1">Methenyltetrahydrofolate cyclohydrolase</fullName>
            <ecNumber evidence="1">3.5.4.9</ecNumber>
        </recommendedName>
    </domain>
</protein>
<gene>
    <name evidence="1" type="primary">folD</name>
    <name type="ordered locus">LMHCC_1211</name>
</gene>
<sequence length="284" mass="30924">MGEIIDGKKLAKEIQEKVTREVAELVKEGKKPGLAVVLVGDNQASRTYVRNKQKRTEEAGMKSVLIELPENVTEEKLLSVVEELNEDKTIHGILVQLPLPEHISEEKVIDTISYDKDVDGFHPVNVGNLFIGKDSFVPCTPAGIIELIKSTGTQIEGKRAVVIGRSNIVGKPVAQLLLNENATVTIAHSRTKDLPQVAKEADILVVATGLAKFVKKDYIKPGAIVIDVGMDRDENNKLCGDVDFDDVVEEAGFITPVPGGVGPMTITMLLANTLKAAKRIWKMN</sequence>
<name>FOLD_LISMH</name>
<keyword id="KW-0028">Amino-acid biosynthesis</keyword>
<keyword id="KW-0368">Histidine biosynthesis</keyword>
<keyword id="KW-0378">Hydrolase</keyword>
<keyword id="KW-0486">Methionine biosynthesis</keyword>
<keyword id="KW-0511">Multifunctional enzyme</keyword>
<keyword id="KW-0521">NADP</keyword>
<keyword id="KW-0554">One-carbon metabolism</keyword>
<keyword id="KW-0560">Oxidoreductase</keyword>
<keyword id="KW-0658">Purine biosynthesis</keyword>
<dbReference type="EC" id="1.5.1.5" evidence="1"/>
<dbReference type="EC" id="3.5.4.9" evidence="1"/>
<dbReference type="EMBL" id="CP001175">
    <property type="protein sequence ID" value="ACK39558.1"/>
    <property type="molecule type" value="Genomic_DNA"/>
</dbReference>
<dbReference type="RefSeq" id="WP_003726249.1">
    <property type="nucleotide sequence ID" value="NC_011660.1"/>
</dbReference>
<dbReference type="SMR" id="B8DFW8"/>
<dbReference type="KEGG" id="lmh:LMHCC_1211"/>
<dbReference type="HOGENOM" id="CLU_034045_2_1_9"/>
<dbReference type="UniPathway" id="UPA00193"/>
<dbReference type="GO" id="GO:0005829">
    <property type="term" value="C:cytosol"/>
    <property type="evidence" value="ECO:0007669"/>
    <property type="project" value="TreeGrafter"/>
</dbReference>
<dbReference type="GO" id="GO:0004477">
    <property type="term" value="F:methenyltetrahydrofolate cyclohydrolase activity"/>
    <property type="evidence" value="ECO:0007669"/>
    <property type="project" value="UniProtKB-UniRule"/>
</dbReference>
<dbReference type="GO" id="GO:0004488">
    <property type="term" value="F:methylenetetrahydrofolate dehydrogenase (NADP+) activity"/>
    <property type="evidence" value="ECO:0007669"/>
    <property type="project" value="UniProtKB-UniRule"/>
</dbReference>
<dbReference type="GO" id="GO:0000105">
    <property type="term" value="P:L-histidine biosynthetic process"/>
    <property type="evidence" value="ECO:0007669"/>
    <property type="project" value="UniProtKB-KW"/>
</dbReference>
<dbReference type="GO" id="GO:0009086">
    <property type="term" value="P:methionine biosynthetic process"/>
    <property type="evidence" value="ECO:0007669"/>
    <property type="project" value="UniProtKB-KW"/>
</dbReference>
<dbReference type="GO" id="GO:0006164">
    <property type="term" value="P:purine nucleotide biosynthetic process"/>
    <property type="evidence" value="ECO:0007669"/>
    <property type="project" value="UniProtKB-KW"/>
</dbReference>
<dbReference type="GO" id="GO:0035999">
    <property type="term" value="P:tetrahydrofolate interconversion"/>
    <property type="evidence" value="ECO:0007669"/>
    <property type="project" value="UniProtKB-UniRule"/>
</dbReference>
<dbReference type="CDD" id="cd01080">
    <property type="entry name" value="NAD_bind_m-THF_DH_Cyclohyd"/>
    <property type="match status" value="1"/>
</dbReference>
<dbReference type="FunFam" id="3.40.50.10860:FF:000001">
    <property type="entry name" value="Bifunctional protein FolD"/>
    <property type="match status" value="1"/>
</dbReference>
<dbReference type="FunFam" id="3.40.50.720:FF:000094">
    <property type="entry name" value="Bifunctional protein FolD"/>
    <property type="match status" value="1"/>
</dbReference>
<dbReference type="Gene3D" id="3.40.50.10860">
    <property type="entry name" value="Leucine Dehydrogenase, chain A, domain 1"/>
    <property type="match status" value="1"/>
</dbReference>
<dbReference type="Gene3D" id="3.40.50.720">
    <property type="entry name" value="NAD(P)-binding Rossmann-like Domain"/>
    <property type="match status" value="1"/>
</dbReference>
<dbReference type="HAMAP" id="MF_01576">
    <property type="entry name" value="THF_DHG_CYH"/>
    <property type="match status" value="1"/>
</dbReference>
<dbReference type="InterPro" id="IPR046346">
    <property type="entry name" value="Aminoacid_DH-like_N_sf"/>
</dbReference>
<dbReference type="InterPro" id="IPR036291">
    <property type="entry name" value="NAD(P)-bd_dom_sf"/>
</dbReference>
<dbReference type="InterPro" id="IPR000672">
    <property type="entry name" value="THF_DH/CycHdrlase"/>
</dbReference>
<dbReference type="InterPro" id="IPR020630">
    <property type="entry name" value="THF_DH/CycHdrlase_cat_dom"/>
</dbReference>
<dbReference type="InterPro" id="IPR020867">
    <property type="entry name" value="THF_DH/CycHdrlase_CS"/>
</dbReference>
<dbReference type="InterPro" id="IPR020631">
    <property type="entry name" value="THF_DH/CycHdrlase_NAD-bd_dom"/>
</dbReference>
<dbReference type="NCBIfam" id="NF008058">
    <property type="entry name" value="PRK10792.1"/>
    <property type="match status" value="1"/>
</dbReference>
<dbReference type="NCBIfam" id="NF010767">
    <property type="entry name" value="PRK14170.1"/>
    <property type="match status" value="1"/>
</dbReference>
<dbReference type="NCBIfam" id="NF010783">
    <property type="entry name" value="PRK14186.1"/>
    <property type="match status" value="1"/>
</dbReference>
<dbReference type="NCBIfam" id="NF010785">
    <property type="entry name" value="PRK14188.1"/>
    <property type="match status" value="1"/>
</dbReference>
<dbReference type="PANTHER" id="PTHR48099:SF5">
    <property type="entry name" value="C-1-TETRAHYDROFOLATE SYNTHASE, CYTOPLASMIC"/>
    <property type="match status" value="1"/>
</dbReference>
<dbReference type="PANTHER" id="PTHR48099">
    <property type="entry name" value="C-1-TETRAHYDROFOLATE SYNTHASE, CYTOPLASMIC-RELATED"/>
    <property type="match status" value="1"/>
</dbReference>
<dbReference type="Pfam" id="PF00763">
    <property type="entry name" value="THF_DHG_CYH"/>
    <property type="match status" value="1"/>
</dbReference>
<dbReference type="Pfam" id="PF02882">
    <property type="entry name" value="THF_DHG_CYH_C"/>
    <property type="match status" value="1"/>
</dbReference>
<dbReference type="PRINTS" id="PR00085">
    <property type="entry name" value="THFDHDRGNASE"/>
</dbReference>
<dbReference type="SUPFAM" id="SSF53223">
    <property type="entry name" value="Aminoacid dehydrogenase-like, N-terminal domain"/>
    <property type="match status" value="1"/>
</dbReference>
<dbReference type="SUPFAM" id="SSF51735">
    <property type="entry name" value="NAD(P)-binding Rossmann-fold domains"/>
    <property type="match status" value="1"/>
</dbReference>
<dbReference type="PROSITE" id="PS00766">
    <property type="entry name" value="THF_DHG_CYH_1"/>
    <property type="match status" value="1"/>
</dbReference>
<dbReference type="PROSITE" id="PS00767">
    <property type="entry name" value="THF_DHG_CYH_2"/>
    <property type="match status" value="1"/>
</dbReference>
<organism>
    <name type="scientific">Listeria monocytogenes serotype 4a (strain HCC23)</name>
    <dbReference type="NCBI Taxonomy" id="552536"/>
    <lineage>
        <taxon>Bacteria</taxon>
        <taxon>Bacillati</taxon>
        <taxon>Bacillota</taxon>
        <taxon>Bacilli</taxon>
        <taxon>Bacillales</taxon>
        <taxon>Listeriaceae</taxon>
        <taxon>Listeria</taxon>
    </lineage>
</organism>
<evidence type="ECO:0000255" key="1">
    <source>
        <dbReference type="HAMAP-Rule" id="MF_01576"/>
    </source>
</evidence>
<comment type="function">
    <text evidence="1">Catalyzes the oxidation of 5,10-methylenetetrahydrofolate to 5,10-methenyltetrahydrofolate and then the hydrolysis of 5,10-methenyltetrahydrofolate to 10-formyltetrahydrofolate.</text>
</comment>
<comment type="catalytic activity">
    <reaction evidence="1">
        <text>(6R)-5,10-methylene-5,6,7,8-tetrahydrofolate + NADP(+) = (6R)-5,10-methenyltetrahydrofolate + NADPH</text>
        <dbReference type="Rhea" id="RHEA:22812"/>
        <dbReference type="ChEBI" id="CHEBI:15636"/>
        <dbReference type="ChEBI" id="CHEBI:57455"/>
        <dbReference type="ChEBI" id="CHEBI:57783"/>
        <dbReference type="ChEBI" id="CHEBI:58349"/>
        <dbReference type="EC" id="1.5.1.5"/>
    </reaction>
</comment>
<comment type="catalytic activity">
    <reaction evidence="1">
        <text>(6R)-5,10-methenyltetrahydrofolate + H2O = (6R)-10-formyltetrahydrofolate + H(+)</text>
        <dbReference type="Rhea" id="RHEA:23700"/>
        <dbReference type="ChEBI" id="CHEBI:15377"/>
        <dbReference type="ChEBI" id="CHEBI:15378"/>
        <dbReference type="ChEBI" id="CHEBI:57455"/>
        <dbReference type="ChEBI" id="CHEBI:195366"/>
        <dbReference type="EC" id="3.5.4.9"/>
    </reaction>
</comment>
<comment type="pathway">
    <text evidence="1">One-carbon metabolism; tetrahydrofolate interconversion.</text>
</comment>
<comment type="subunit">
    <text evidence="1">Homodimer.</text>
</comment>
<comment type="similarity">
    <text evidence="1">Belongs to the tetrahydrofolate dehydrogenase/cyclohydrolase family.</text>
</comment>